<organism>
    <name type="scientific">Caulobacter vibrioides (strain ATCC 19089 / CIP 103742 / CB 15)</name>
    <name type="common">Caulobacter crescentus</name>
    <dbReference type="NCBI Taxonomy" id="190650"/>
    <lineage>
        <taxon>Bacteria</taxon>
        <taxon>Pseudomonadati</taxon>
        <taxon>Pseudomonadota</taxon>
        <taxon>Alphaproteobacteria</taxon>
        <taxon>Caulobacterales</taxon>
        <taxon>Caulobacteraceae</taxon>
        <taxon>Caulobacter</taxon>
    </lineage>
</organism>
<gene>
    <name evidence="1" type="primary">secA</name>
    <name type="ordered locus">CC_3068</name>
</gene>
<keyword id="KW-0067">ATP-binding</keyword>
<keyword id="KW-0997">Cell inner membrane</keyword>
<keyword id="KW-1003">Cell membrane</keyword>
<keyword id="KW-0963">Cytoplasm</keyword>
<keyword id="KW-0472">Membrane</keyword>
<keyword id="KW-0479">Metal-binding</keyword>
<keyword id="KW-0547">Nucleotide-binding</keyword>
<keyword id="KW-0653">Protein transport</keyword>
<keyword id="KW-1185">Reference proteome</keyword>
<keyword id="KW-1278">Translocase</keyword>
<keyword id="KW-0811">Translocation</keyword>
<keyword id="KW-0813">Transport</keyword>
<keyword id="KW-0862">Zinc</keyword>
<protein>
    <recommendedName>
        <fullName evidence="1">Protein translocase subunit SecA</fullName>
        <ecNumber evidence="1">7.4.2.8</ecNumber>
    </recommendedName>
</protein>
<proteinExistence type="inferred from homology"/>
<reference key="1">
    <citation type="journal article" date="2001" name="Proc. Natl. Acad. Sci. U.S.A.">
        <title>Complete genome sequence of Caulobacter crescentus.</title>
        <authorList>
            <person name="Nierman W.C."/>
            <person name="Feldblyum T.V."/>
            <person name="Laub M.T."/>
            <person name="Paulsen I.T."/>
            <person name="Nelson K.E."/>
            <person name="Eisen J.A."/>
            <person name="Heidelberg J.F."/>
            <person name="Alley M.R.K."/>
            <person name="Ohta N."/>
            <person name="Maddock J.R."/>
            <person name="Potocka I."/>
            <person name="Nelson W.C."/>
            <person name="Newton A."/>
            <person name="Stephens C."/>
            <person name="Phadke N.D."/>
            <person name="Ely B."/>
            <person name="DeBoy R.T."/>
            <person name="Dodson R.J."/>
            <person name="Durkin A.S."/>
            <person name="Gwinn M.L."/>
            <person name="Haft D.H."/>
            <person name="Kolonay J.F."/>
            <person name="Smit J."/>
            <person name="Craven M.B."/>
            <person name="Khouri H.M."/>
            <person name="Shetty J."/>
            <person name="Berry K.J."/>
            <person name="Utterback T.R."/>
            <person name="Tran K."/>
            <person name="Wolf A.M."/>
            <person name="Vamathevan J.J."/>
            <person name="Ermolaeva M.D."/>
            <person name="White O."/>
            <person name="Salzberg S.L."/>
            <person name="Venter J.C."/>
            <person name="Shapiro L."/>
            <person name="Fraser C.M."/>
        </authorList>
    </citation>
    <scope>NUCLEOTIDE SEQUENCE [LARGE SCALE GENOMIC DNA]</scope>
    <source>
        <strain>ATCC 19089 / CIP 103742 / CB 15</strain>
    </source>
</reference>
<sequence>MLGFAKKLFGSSNERKVKTLATRVAKINAYEAEYAALSDEALKGKTAEFKARLEKGETLDDILNEAFAVVREASKRVLGMRHFDVQMVGGMVLHFSGISEMRTGEGKTLVATLPTYLNALEGKGVHVITVNDYLARRDADWMGQVYNFLGLSYGVIVNGLSQGERQRAYRSDITYGTNNEFGFDYLRDNLVYSVDEMVQRGHNFAIVDEVDSILIDEARTPLIISGPTEDRSSFYKTIDVLVKELILDKSMFDHDEKQKQVILTEDGQEKIEEILMSGGHLAEDSAGLYDAANVSVVHHVNQALRANILYTRDKDYIVKGGEVVLIDEFTGRMMTGRRLSEGLHQAIEAKEGADIQPENQTLASVTIQNYFRLYKKLSGMTGTASTEAQEFDDIYKMSVSEIPTNRTIQRIDDDDEVYRTEREKNEAILKQIADCHVRGQPILVGTVSIEKSEELSKLLSTFSFEKDGKKVKGIPHQVLNARFHEQEAVIVADAGVPGAVTIATNMAGRGTDIQLGGSIDMRLFNWRQQQRGMGLEITVEDEAEERARLETEIADKKAQALAAGGLFVLGTERHESRRIDNQLRGRTGRQGDPGRSKFFLSCEDDLLRIFAGERLDAIMRTFGVQEGEAITHKWLNNAIATAQKRVEQRNYEIRKNLLKYDDVVNDQRKAVFEQRQEFMESSDLSDIIHEMRRDVIDDLVLRHLPPKAYAEQWDVEGLTERVKSILGLDLPIAEWAAEEGIADEEMKERITKAADEYAAQREVIITPEQMRSVEKSFLLQMIDLQWREHLMHLDHLRNVIGLRGYGQRDPLNEYKTEAFSLFEKLLGDLRTNTTRWLMTVEIAYAEPEVPHTPLDNLVEVHLDPLTGENAAFAGGIPEGLSTAQREALPVSALPEGWDRTNRNAPCPCGSGKKFKQCHGSLVR</sequence>
<comment type="function">
    <text evidence="1">Part of the Sec protein translocase complex. Interacts with the SecYEG preprotein conducting channel. Has a central role in coupling the hydrolysis of ATP to the transfer of proteins into and across the cell membrane, serving both as a receptor for the preprotein-SecB complex and as an ATP-driven molecular motor driving the stepwise translocation of polypeptide chains across the membrane.</text>
</comment>
<comment type="catalytic activity">
    <reaction evidence="1">
        <text>ATP + H2O + cellular proteinSide 1 = ADP + phosphate + cellular proteinSide 2.</text>
        <dbReference type="EC" id="7.4.2.8"/>
    </reaction>
</comment>
<comment type="cofactor">
    <cofactor evidence="1">
        <name>Zn(2+)</name>
        <dbReference type="ChEBI" id="CHEBI:29105"/>
    </cofactor>
    <text evidence="1">May bind 1 zinc ion per subunit.</text>
</comment>
<comment type="subunit">
    <text evidence="1">Monomer and homodimer. Part of the essential Sec protein translocation apparatus which comprises SecA, SecYEG and auxiliary proteins SecDF-YajC and YidC.</text>
</comment>
<comment type="subcellular location">
    <subcellularLocation>
        <location evidence="1">Cell inner membrane</location>
        <topology evidence="1">Peripheral membrane protein</topology>
        <orientation evidence="1">Cytoplasmic side</orientation>
    </subcellularLocation>
    <subcellularLocation>
        <location evidence="1">Cytoplasm</location>
    </subcellularLocation>
    <text evidence="1">Distribution is 50-50.</text>
</comment>
<comment type="similarity">
    <text evidence="1">Belongs to the SecA family.</text>
</comment>
<feature type="chain" id="PRO_0000109581" description="Protein translocase subunit SecA">
    <location>
        <begin position="1"/>
        <end position="923"/>
    </location>
</feature>
<feature type="binding site" evidence="1">
    <location>
        <position position="86"/>
    </location>
    <ligand>
        <name>ATP</name>
        <dbReference type="ChEBI" id="CHEBI:30616"/>
    </ligand>
</feature>
<feature type="binding site" evidence="1">
    <location>
        <begin position="104"/>
        <end position="108"/>
    </location>
    <ligand>
        <name>ATP</name>
        <dbReference type="ChEBI" id="CHEBI:30616"/>
    </ligand>
</feature>
<feature type="binding site" evidence="1">
    <location>
        <position position="512"/>
    </location>
    <ligand>
        <name>ATP</name>
        <dbReference type="ChEBI" id="CHEBI:30616"/>
    </ligand>
</feature>
<feature type="binding site" evidence="1">
    <location>
        <position position="906"/>
    </location>
    <ligand>
        <name>Zn(2+)</name>
        <dbReference type="ChEBI" id="CHEBI:29105"/>
    </ligand>
</feature>
<feature type="binding site" evidence="1">
    <location>
        <position position="908"/>
    </location>
    <ligand>
        <name>Zn(2+)</name>
        <dbReference type="ChEBI" id="CHEBI:29105"/>
    </ligand>
</feature>
<feature type="binding site" evidence="1">
    <location>
        <position position="917"/>
    </location>
    <ligand>
        <name>Zn(2+)</name>
        <dbReference type="ChEBI" id="CHEBI:29105"/>
    </ligand>
</feature>
<feature type="binding site" evidence="1">
    <location>
        <position position="918"/>
    </location>
    <ligand>
        <name>Zn(2+)</name>
        <dbReference type="ChEBI" id="CHEBI:29105"/>
    </ligand>
</feature>
<dbReference type="EC" id="7.4.2.8" evidence="1"/>
<dbReference type="EMBL" id="AE005673">
    <property type="protein sequence ID" value="AAK25030.1"/>
    <property type="molecule type" value="Genomic_DNA"/>
</dbReference>
<dbReference type="PIR" id="B87629">
    <property type="entry name" value="B87629"/>
</dbReference>
<dbReference type="RefSeq" id="NP_421862.1">
    <property type="nucleotide sequence ID" value="NC_002696.2"/>
</dbReference>
<dbReference type="RefSeq" id="WP_010920904.1">
    <property type="nucleotide sequence ID" value="NC_002696.2"/>
</dbReference>
<dbReference type="SMR" id="P0CAW7"/>
<dbReference type="STRING" id="190650.CC_3068"/>
<dbReference type="EnsemblBacteria" id="AAK25030">
    <property type="protein sequence ID" value="AAK25030"/>
    <property type="gene ID" value="CC_3068"/>
</dbReference>
<dbReference type="KEGG" id="ccr:CC_3068"/>
<dbReference type="PATRIC" id="fig|190650.5.peg.3073"/>
<dbReference type="eggNOG" id="COG0653">
    <property type="taxonomic scope" value="Bacteria"/>
</dbReference>
<dbReference type="HOGENOM" id="CLU_005314_3_0_5"/>
<dbReference type="BioCyc" id="CAULO:CC3068-MONOMER"/>
<dbReference type="Proteomes" id="UP000001816">
    <property type="component" value="Chromosome"/>
</dbReference>
<dbReference type="GO" id="GO:0031522">
    <property type="term" value="C:cell envelope Sec protein transport complex"/>
    <property type="evidence" value="ECO:0007669"/>
    <property type="project" value="TreeGrafter"/>
</dbReference>
<dbReference type="GO" id="GO:0005829">
    <property type="term" value="C:cytosol"/>
    <property type="evidence" value="ECO:0007669"/>
    <property type="project" value="TreeGrafter"/>
</dbReference>
<dbReference type="GO" id="GO:0005886">
    <property type="term" value="C:plasma membrane"/>
    <property type="evidence" value="ECO:0007669"/>
    <property type="project" value="UniProtKB-SubCell"/>
</dbReference>
<dbReference type="GO" id="GO:0005524">
    <property type="term" value="F:ATP binding"/>
    <property type="evidence" value="ECO:0007669"/>
    <property type="project" value="UniProtKB-UniRule"/>
</dbReference>
<dbReference type="GO" id="GO:0046872">
    <property type="term" value="F:metal ion binding"/>
    <property type="evidence" value="ECO:0007669"/>
    <property type="project" value="UniProtKB-KW"/>
</dbReference>
<dbReference type="GO" id="GO:0008564">
    <property type="term" value="F:protein-exporting ATPase activity"/>
    <property type="evidence" value="ECO:0007669"/>
    <property type="project" value="UniProtKB-EC"/>
</dbReference>
<dbReference type="GO" id="GO:0065002">
    <property type="term" value="P:intracellular protein transmembrane transport"/>
    <property type="evidence" value="ECO:0007669"/>
    <property type="project" value="UniProtKB-UniRule"/>
</dbReference>
<dbReference type="GO" id="GO:0017038">
    <property type="term" value="P:protein import"/>
    <property type="evidence" value="ECO:0007669"/>
    <property type="project" value="InterPro"/>
</dbReference>
<dbReference type="GO" id="GO:0006605">
    <property type="term" value="P:protein targeting"/>
    <property type="evidence" value="ECO:0007669"/>
    <property type="project" value="UniProtKB-UniRule"/>
</dbReference>
<dbReference type="GO" id="GO:0043952">
    <property type="term" value="P:protein transport by the Sec complex"/>
    <property type="evidence" value="ECO:0007669"/>
    <property type="project" value="TreeGrafter"/>
</dbReference>
<dbReference type="CDD" id="cd17928">
    <property type="entry name" value="DEXDc_SecA"/>
    <property type="match status" value="1"/>
</dbReference>
<dbReference type="CDD" id="cd18803">
    <property type="entry name" value="SF2_C_secA"/>
    <property type="match status" value="1"/>
</dbReference>
<dbReference type="FunFam" id="3.40.50.300:FF:000113">
    <property type="entry name" value="Preprotein translocase subunit SecA"/>
    <property type="match status" value="1"/>
</dbReference>
<dbReference type="FunFam" id="3.90.1440.10:FF:000001">
    <property type="entry name" value="Preprotein translocase subunit SecA"/>
    <property type="match status" value="1"/>
</dbReference>
<dbReference type="FunFam" id="1.10.3060.10:FF:000003">
    <property type="entry name" value="Protein translocase subunit SecA"/>
    <property type="match status" value="1"/>
</dbReference>
<dbReference type="FunFam" id="3.40.50.300:FF:000334">
    <property type="entry name" value="Protein translocase subunit SecA"/>
    <property type="match status" value="1"/>
</dbReference>
<dbReference type="Gene3D" id="3.10.450.50">
    <property type="match status" value="1"/>
</dbReference>
<dbReference type="Gene3D" id="1.10.3060.10">
    <property type="entry name" value="Helical scaffold and wing domains of SecA"/>
    <property type="match status" value="1"/>
</dbReference>
<dbReference type="Gene3D" id="3.40.50.300">
    <property type="entry name" value="P-loop containing nucleotide triphosphate hydrolases"/>
    <property type="match status" value="2"/>
</dbReference>
<dbReference type="Gene3D" id="3.90.1440.10">
    <property type="entry name" value="SecA, preprotein cross-linking domain"/>
    <property type="match status" value="1"/>
</dbReference>
<dbReference type="HAMAP" id="MF_01382">
    <property type="entry name" value="SecA"/>
    <property type="match status" value="1"/>
</dbReference>
<dbReference type="InterPro" id="IPR014001">
    <property type="entry name" value="Helicase_ATP-bd"/>
</dbReference>
<dbReference type="InterPro" id="IPR001650">
    <property type="entry name" value="Helicase_C-like"/>
</dbReference>
<dbReference type="InterPro" id="IPR027417">
    <property type="entry name" value="P-loop_NTPase"/>
</dbReference>
<dbReference type="InterPro" id="IPR004027">
    <property type="entry name" value="SEC_C_motif"/>
</dbReference>
<dbReference type="InterPro" id="IPR000185">
    <property type="entry name" value="SecA"/>
</dbReference>
<dbReference type="InterPro" id="IPR020937">
    <property type="entry name" value="SecA_CS"/>
</dbReference>
<dbReference type="InterPro" id="IPR011115">
    <property type="entry name" value="SecA_DEAD"/>
</dbReference>
<dbReference type="InterPro" id="IPR014018">
    <property type="entry name" value="SecA_motor_DEAD"/>
</dbReference>
<dbReference type="InterPro" id="IPR011130">
    <property type="entry name" value="SecA_preprotein_X-link_dom"/>
</dbReference>
<dbReference type="InterPro" id="IPR044722">
    <property type="entry name" value="SecA_SF2_C"/>
</dbReference>
<dbReference type="InterPro" id="IPR011116">
    <property type="entry name" value="SecA_Wing/Scaffold"/>
</dbReference>
<dbReference type="InterPro" id="IPR036266">
    <property type="entry name" value="SecA_Wing/Scaffold_sf"/>
</dbReference>
<dbReference type="InterPro" id="IPR036670">
    <property type="entry name" value="SecA_X-link_sf"/>
</dbReference>
<dbReference type="NCBIfam" id="NF009538">
    <property type="entry name" value="PRK12904.1"/>
    <property type="match status" value="1"/>
</dbReference>
<dbReference type="NCBIfam" id="TIGR00963">
    <property type="entry name" value="secA"/>
    <property type="match status" value="1"/>
</dbReference>
<dbReference type="PANTHER" id="PTHR30612:SF0">
    <property type="entry name" value="CHLOROPLAST PROTEIN-TRANSPORTING ATPASE"/>
    <property type="match status" value="1"/>
</dbReference>
<dbReference type="PANTHER" id="PTHR30612">
    <property type="entry name" value="SECA INNER MEMBRANE COMPONENT OF SEC PROTEIN SECRETION SYSTEM"/>
    <property type="match status" value="1"/>
</dbReference>
<dbReference type="Pfam" id="PF21090">
    <property type="entry name" value="P-loop_SecA"/>
    <property type="match status" value="1"/>
</dbReference>
<dbReference type="Pfam" id="PF02810">
    <property type="entry name" value="SEC-C"/>
    <property type="match status" value="1"/>
</dbReference>
<dbReference type="Pfam" id="PF07517">
    <property type="entry name" value="SecA_DEAD"/>
    <property type="match status" value="1"/>
</dbReference>
<dbReference type="Pfam" id="PF01043">
    <property type="entry name" value="SecA_PP_bind"/>
    <property type="match status" value="1"/>
</dbReference>
<dbReference type="Pfam" id="PF07516">
    <property type="entry name" value="SecA_SW"/>
    <property type="match status" value="1"/>
</dbReference>
<dbReference type="PRINTS" id="PR00906">
    <property type="entry name" value="SECA"/>
</dbReference>
<dbReference type="SMART" id="SM00957">
    <property type="entry name" value="SecA_DEAD"/>
    <property type="match status" value="1"/>
</dbReference>
<dbReference type="SMART" id="SM00958">
    <property type="entry name" value="SecA_PP_bind"/>
    <property type="match status" value="1"/>
</dbReference>
<dbReference type="SUPFAM" id="SSF81886">
    <property type="entry name" value="Helical scaffold and wing domains of SecA"/>
    <property type="match status" value="1"/>
</dbReference>
<dbReference type="SUPFAM" id="SSF52540">
    <property type="entry name" value="P-loop containing nucleoside triphosphate hydrolases"/>
    <property type="match status" value="2"/>
</dbReference>
<dbReference type="SUPFAM" id="SSF81767">
    <property type="entry name" value="Pre-protein crosslinking domain of SecA"/>
    <property type="match status" value="1"/>
</dbReference>
<dbReference type="PROSITE" id="PS01312">
    <property type="entry name" value="SECA"/>
    <property type="match status" value="1"/>
</dbReference>
<dbReference type="PROSITE" id="PS51196">
    <property type="entry name" value="SECA_MOTOR_DEAD"/>
    <property type="match status" value="1"/>
</dbReference>
<name>SECA_CAUVC</name>
<evidence type="ECO:0000255" key="1">
    <source>
        <dbReference type="HAMAP-Rule" id="MF_01382"/>
    </source>
</evidence>
<accession>P0CAW7</accession>
<accession>P38380</accession>